<organism>
    <name type="scientific">Streptococcus pyogenes serotype M1</name>
    <dbReference type="NCBI Taxonomy" id="301447"/>
    <lineage>
        <taxon>Bacteria</taxon>
        <taxon>Bacillati</taxon>
        <taxon>Bacillota</taxon>
        <taxon>Bacilli</taxon>
        <taxon>Lactobacillales</taxon>
        <taxon>Streptococcaceae</taxon>
        <taxon>Streptococcus</taxon>
    </lineage>
</organism>
<evidence type="ECO:0000255" key="1">
    <source>
        <dbReference type="HAMAP-Rule" id="MF_00344"/>
    </source>
</evidence>
<name>GUAA_STRP1</name>
<accession>P64299</accession>
<accession>Q48YN5</accession>
<accession>Q99ZJ7</accession>
<dbReference type="EC" id="6.3.5.2" evidence="1"/>
<dbReference type="EMBL" id="AE004092">
    <property type="protein sequence ID" value="AAK34064.1"/>
    <property type="molecule type" value="Genomic_DNA"/>
</dbReference>
<dbReference type="EMBL" id="CP000017">
    <property type="protein sequence ID" value="AAZ51537.1"/>
    <property type="molecule type" value="Genomic_DNA"/>
</dbReference>
<dbReference type="RefSeq" id="NP_269343.1">
    <property type="nucleotide sequence ID" value="NC_002737.2"/>
</dbReference>
<dbReference type="SMR" id="P64299"/>
<dbReference type="MEROPS" id="C26.957"/>
<dbReference type="PaxDb" id="1314-HKU360_00963"/>
<dbReference type="KEGG" id="spy:SPy_1204"/>
<dbReference type="KEGG" id="spz:M5005_Spy0919"/>
<dbReference type="PATRIC" id="fig|160490.10.peg.1051"/>
<dbReference type="HOGENOM" id="CLU_014340_0_5_9"/>
<dbReference type="OMA" id="IWQSFAV"/>
<dbReference type="UniPathway" id="UPA00189">
    <property type="reaction ID" value="UER00296"/>
</dbReference>
<dbReference type="Proteomes" id="UP000000750">
    <property type="component" value="Chromosome"/>
</dbReference>
<dbReference type="GO" id="GO:0005829">
    <property type="term" value="C:cytosol"/>
    <property type="evidence" value="ECO:0007669"/>
    <property type="project" value="TreeGrafter"/>
</dbReference>
<dbReference type="GO" id="GO:0005524">
    <property type="term" value="F:ATP binding"/>
    <property type="evidence" value="ECO:0007669"/>
    <property type="project" value="UniProtKB-UniRule"/>
</dbReference>
<dbReference type="GO" id="GO:0003921">
    <property type="term" value="F:GMP synthase activity"/>
    <property type="evidence" value="ECO:0007669"/>
    <property type="project" value="InterPro"/>
</dbReference>
<dbReference type="CDD" id="cd01742">
    <property type="entry name" value="GATase1_GMP_Synthase"/>
    <property type="match status" value="1"/>
</dbReference>
<dbReference type="CDD" id="cd01997">
    <property type="entry name" value="GMP_synthase_C"/>
    <property type="match status" value="1"/>
</dbReference>
<dbReference type="FunFam" id="3.30.300.10:FF:000002">
    <property type="entry name" value="GMP synthase [glutamine-hydrolyzing]"/>
    <property type="match status" value="1"/>
</dbReference>
<dbReference type="FunFam" id="3.40.50.620:FF:000001">
    <property type="entry name" value="GMP synthase [glutamine-hydrolyzing]"/>
    <property type="match status" value="1"/>
</dbReference>
<dbReference type="FunFam" id="3.40.50.880:FF:000001">
    <property type="entry name" value="GMP synthase [glutamine-hydrolyzing]"/>
    <property type="match status" value="1"/>
</dbReference>
<dbReference type="Gene3D" id="3.30.300.10">
    <property type="match status" value="1"/>
</dbReference>
<dbReference type="Gene3D" id="3.40.50.880">
    <property type="match status" value="1"/>
</dbReference>
<dbReference type="Gene3D" id="3.40.50.620">
    <property type="entry name" value="HUPs"/>
    <property type="match status" value="1"/>
</dbReference>
<dbReference type="HAMAP" id="MF_00344">
    <property type="entry name" value="GMP_synthase"/>
    <property type="match status" value="1"/>
</dbReference>
<dbReference type="InterPro" id="IPR029062">
    <property type="entry name" value="Class_I_gatase-like"/>
</dbReference>
<dbReference type="InterPro" id="IPR017926">
    <property type="entry name" value="GATASE"/>
</dbReference>
<dbReference type="InterPro" id="IPR001674">
    <property type="entry name" value="GMP_synth_C"/>
</dbReference>
<dbReference type="InterPro" id="IPR004739">
    <property type="entry name" value="GMP_synth_GATase"/>
</dbReference>
<dbReference type="InterPro" id="IPR022955">
    <property type="entry name" value="GMP_synthase"/>
</dbReference>
<dbReference type="InterPro" id="IPR025777">
    <property type="entry name" value="GMPS_ATP_PPase_dom"/>
</dbReference>
<dbReference type="InterPro" id="IPR022310">
    <property type="entry name" value="NAD/GMP_synthase"/>
</dbReference>
<dbReference type="InterPro" id="IPR014729">
    <property type="entry name" value="Rossmann-like_a/b/a_fold"/>
</dbReference>
<dbReference type="NCBIfam" id="TIGR00884">
    <property type="entry name" value="guaA_Cterm"/>
    <property type="match status" value="1"/>
</dbReference>
<dbReference type="NCBIfam" id="TIGR00888">
    <property type="entry name" value="guaA_Nterm"/>
    <property type="match status" value="1"/>
</dbReference>
<dbReference type="NCBIfam" id="NF000848">
    <property type="entry name" value="PRK00074.1"/>
    <property type="match status" value="1"/>
</dbReference>
<dbReference type="PANTHER" id="PTHR11922:SF2">
    <property type="entry name" value="GMP SYNTHASE [GLUTAMINE-HYDROLYZING]"/>
    <property type="match status" value="1"/>
</dbReference>
<dbReference type="PANTHER" id="PTHR11922">
    <property type="entry name" value="GMP SYNTHASE-RELATED"/>
    <property type="match status" value="1"/>
</dbReference>
<dbReference type="Pfam" id="PF00117">
    <property type="entry name" value="GATase"/>
    <property type="match status" value="1"/>
</dbReference>
<dbReference type="Pfam" id="PF00958">
    <property type="entry name" value="GMP_synt_C"/>
    <property type="match status" value="1"/>
</dbReference>
<dbReference type="Pfam" id="PF02540">
    <property type="entry name" value="NAD_synthase"/>
    <property type="match status" value="1"/>
</dbReference>
<dbReference type="PRINTS" id="PR00097">
    <property type="entry name" value="ANTSNTHASEII"/>
</dbReference>
<dbReference type="PRINTS" id="PR00099">
    <property type="entry name" value="CPSGATASE"/>
</dbReference>
<dbReference type="PRINTS" id="PR00096">
    <property type="entry name" value="GATASE"/>
</dbReference>
<dbReference type="SUPFAM" id="SSF52402">
    <property type="entry name" value="Adenine nucleotide alpha hydrolases-like"/>
    <property type="match status" value="1"/>
</dbReference>
<dbReference type="SUPFAM" id="SSF52317">
    <property type="entry name" value="Class I glutamine amidotransferase-like"/>
    <property type="match status" value="1"/>
</dbReference>
<dbReference type="SUPFAM" id="SSF54810">
    <property type="entry name" value="GMP synthetase C-terminal dimerisation domain"/>
    <property type="match status" value="1"/>
</dbReference>
<dbReference type="PROSITE" id="PS51273">
    <property type="entry name" value="GATASE_TYPE_1"/>
    <property type="match status" value="1"/>
</dbReference>
<dbReference type="PROSITE" id="PS51553">
    <property type="entry name" value="GMPS_ATP_PPASE"/>
    <property type="match status" value="1"/>
</dbReference>
<sequence length="520" mass="57502">MTEISILNDVQKIIVLDYGSQYNQLIARRIREFGVFSELKSHKITAQELREINPIGIVLSGGPNSVYADNAFGIDPEIFELGIPILGICYGMQLITHKLGGKVVPAGQAGNREYGQSTLHLRETSKLFSGTPQEQLVLMSHGDAVTEIPEGFHLVGDSNDCPYAAIENTEKNLYGIQFHPEVRHSVYGNDILKNFAISICGARGDWSMDNFIDMEIAKIRETVGDRKVLLGLSGGVDSSVVGVLLQKAIGDQLTCIFVDHGLLRKDEGDQVMGMLGGKFGLNIIRVDASKRFLDLLADVEDPEKKRKIIGNEFVYVFDDEASKLKGVDFLAQGTLYTDIIESGTETAQTIKSHHNVGGLPEDMQFELIEPLNTLFKDEVRALGIALGMPEEIVWRQPFPGPGLAIRVMGAITEEKLETVRESDAILREEIAKAGLDRDVWQYFTVNTGVRSVGVMGDGRTYDYTIAIRAITSIDGMTADFAQLPWDVLKKISTRIVNEVDHVNRIVYDITSKPPATVEWE</sequence>
<gene>
    <name evidence="1" type="primary">guaA</name>
    <name type="ordered locus">SPy_1204</name>
    <name type="ordered locus">M5005_Spy0919</name>
</gene>
<feature type="chain" id="PRO_0000140190" description="GMP synthase [glutamine-hydrolyzing]">
    <location>
        <begin position="1"/>
        <end position="520"/>
    </location>
</feature>
<feature type="domain" description="Glutamine amidotransferase type-1" evidence="1">
    <location>
        <begin position="12"/>
        <end position="205"/>
    </location>
</feature>
<feature type="domain" description="GMPS ATP-PPase" evidence="1">
    <location>
        <begin position="206"/>
        <end position="395"/>
    </location>
</feature>
<feature type="active site" description="Nucleophile" evidence="1">
    <location>
        <position position="89"/>
    </location>
</feature>
<feature type="active site" evidence="1">
    <location>
        <position position="179"/>
    </location>
</feature>
<feature type="active site" evidence="1">
    <location>
        <position position="181"/>
    </location>
</feature>
<feature type="binding site" evidence="1">
    <location>
        <begin position="233"/>
        <end position="239"/>
    </location>
    <ligand>
        <name>ATP</name>
        <dbReference type="ChEBI" id="CHEBI:30616"/>
    </ligand>
</feature>
<reference key="1">
    <citation type="journal article" date="2001" name="Proc. Natl. Acad. Sci. U.S.A.">
        <title>Complete genome sequence of an M1 strain of Streptococcus pyogenes.</title>
        <authorList>
            <person name="Ferretti J.J."/>
            <person name="McShan W.M."/>
            <person name="Ajdic D.J."/>
            <person name="Savic D.J."/>
            <person name="Savic G."/>
            <person name="Lyon K."/>
            <person name="Primeaux C."/>
            <person name="Sezate S."/>
            <person name="Suvorov A.N."/>
            <person name="Kenton S."/>
            <person name="Lai H.S."/>
            <person name="Lin S.P."/>
            <person name="Qian Y."/>
            <person name="Jia H.G."/>
            <person name="Najar F.Z."/>
            <person name="Ren Q."/>
            <person name="Zhu H."/>
            <person name="Song L."/>
            <person name="White J."/>
            <person name="Yuan X."/>
            <person name="Clifton S.W."/>
            <person name="Roe B.A."/>
            <person name="McLaughlin R.E."/>
        </authorList>
    </citation>
    <scope>NUCLEOTIDE SEQUENCE [LARGE SCALE GENOMIC DNA]</scope>
    <source>
        <strain>ATCC 700294 / SF370 / Serotype M1</strain>
    </source>
</reference>
<reference key="2">
    <citation type="journal article" date="2005" name="J. Infect. Dis.">
        <title>Evolutionary origin and emergence of a highly successful clone of serotype M1 group A Streptococcus involved multiple horizontal gene transfer events.</title>
        <authorList>
            <person name="Sumby P."/>
            <person name="Porcella S.F."/>
            <person name="Madrigal A.G."/>
            <person name="Barbian K.D."/>
            <person name="Virtaneva K."/>
            <person name="Ricklefs S.M."/>
            <person name="Sturdevant D.E."/>
            <person name="Graham M.R."/>
            <person name="Vuopio-Varkila J."/>
            <person name="Hoe N.P."/>
            <person name="Musser J.M."/>
        </authorList>
    </citation>
    <scope>NUCLEOTIDE SEQUENCE [LARGE SCALE GENOMIC DNA]</scope>
    <source>
        <strain>ATCC BAA-947 / MGAS5005 / Serotype M1</strain>
    </source>
</reference>
<keyword id="KW-0067">ATP-binding</keyword>
<keyword id="KW-0315">Glutamine amidotransferase</keyword>
<keyword id="KW-0332">GMP biosynthesis</keyword>
<keyword id="KW-0436">Ligase</keyword>
<keyword id="KW-0547">Nucleotide-binding</keyword>
<keyword id="KW-0658">Purine biosynthesis</keyword>
<keyword id="KW-1185">Reference proteome</keyword>
<comment type="function">
    <text evidence="1">Catalyzes the synthesis of GMP from XMP.</text>
</comment>
<comment type="catalytic activity">
    <reaction evidence="1">
        <text>XMP + L-glutamine + ATP + H2O = GMP + L-glutamate + AMP + diphosphate + 2 H(+)</text>
        <dbReference type="Rhea" id="RHEA:11680"/>
        <dbReference type="ChEBI" id="CHEBI:15377"/>
        <dbReference type="ChEBI" id="CHEBI:15378"/>
        <dbReference type="ChEBI" id="CHEBI:29985"/>
        <dbReference type="ChEBI" id="CHEBI:30616"/>
        <dbReference type="ChEBI" id="CHEBI:33019"/>
        <dbReference type="ChEBI" id="CHEBI:57464"/>
        <dbReference type="ChEBI" id="CHEBI:58115"/>
        <dbReference type="ChEBI" id="CHEBI:58359"/>
        <dbReference type="ChEBI" id="CHEBI:456215"/>
        <dbReference type="EC" id="6.3.5.2"/>
    </reaction>
</comment>
<comment type="pathway">
    <text evidence="1">Purine metabolism; GMP biosynthesis; GMP from XMP (L-Gln route): step 1/1.</text>
</comment>
<comment type="subunit">
    <text evidence="1">Homodimer.</text>
</comment>
<proteinExistence type="inferred from homology"/>
<protein>
    <recommendedName>
        <fullName evidence="1">GMP synthase [glutamine-hydrolyzing]</fullName>
        <ecNumber evidence="1">6.3.5.2</ecNumber>
    </recommendedName>
    <alternativeName>
        <fullName evidence="1">GMP synthetase</fullName>
    </alternativeName>
    <alternativeName>
        <fullName evidence="1">Glutamine amidotransferase</fullName>
    </alternativeName>
</protein>